<evidence type="ECO:0000250" key="1"/>
<evidence type="ECO:0000255" key="2">
    <source>
        <dbReference type="PROSITE-ProRule" id="PRU00041"/>
    </source>
</evidence>
<evidence type="ECO:0000255" key="3">
    <source>
        <dbReference type="PROSITE-ProRule" id="PRU00145"/>
    </source>
</evidence>
<evidence type="ECO:0000255" key="4">
    <source>
        <dbReference type="PROSITE-ProRule" id="PRU00167"/>
    </source>
</evidence>
<evidence type="ECO:0000255" key="5">
    <source>
        <dbReference type="PROSITE-ProRule" id="PRU00432"/>
    </source>
</evidence>
<evidence type="ECO:0000269" key="6">
    <source>
    </source>
</evidence>
<evidence type="ECO:0000269" key="7">
    <source>
    </source>
</evidence>
<evidence type="ECO:0000303" key="8">
    <source>
    </source>
</evidence>
<evidence type="ECO:0000305" key="9"/>
<protein>
    <recommendedName>
        <fullName>Ras GTPase-activating protein 4</fullName>
    </recommendedName>
    <alternativeName>
        <fullName>Calcium-promoted Ras inactivator</fullName>
    </alternativeName>
    <alternativeName>
        <fullName>Ras p21 protein activator 4</fullName>
    </alternativeName>
    <alternativeName>
        <fullName>RasGAP-activating-like protein 2</fullName>
    </alternativeName>
</protein>
<keyword id="KW-0025">Alternative splicing</keyword>
<keyword id="KW-0106">Calcium</keyword>
<keyword id="KW-1003">Cell membrane</keyword>
<keyword id="KW-0963">Cytoplasm</keyword>
<keyword id="KW-0343">GTPase activation</keyword>
<keyword id="KW-0472">Membrane</keyword>
<keyword id="KW-0479">Metal-binding</keyword>
<keyword id="KW-1185">Reference proteome</keyword>
<keyword id="KW-0677">Repeat</keyword>
<keyword id="KW-0862">Zinc</keyword>
<keyword id="KW-0863">Zinc-finger</keyword>
<reference key="1">
    <citation type="journal article" date="2005" name="Nat. Immunol.">
        <title>An essential function for the calcium-promoted Ras inactivator in Fcgamma receptor-mediated phagocytosis.</title>
        <authorList>
            <person name="Zhang J."/>
            <person name="Guo J."/>
            <person name="Dzhagalov I."/>
            <person name="He Y.W."/>
        </authorList>
    </citation>
    <scope>NUCLEOTIDE SEQUENCE [MRNA] (ISOFORM 1)</scope>
    <scope>FUNCTION</scope>
    <source>
        <strain>C57BL/6J</strain>
        <tissue>Thymus</tissue>
    </source>
</reference>
<reference key="2">
    <citation type="journal article" date="2005" name="J. Biol. Chem.">
        <title>Identification of an alternatively spliced variant of Ca2+-promoted Ras inactivator as a possible regulator of RANKL shedding.</title>
        <authorList>
            <person name="Hikita A."/>
            <person name="Kadono Y."/>
            <person name="Chikuda H."/>
            <person name="Fukuda A."/>
            <person name="Wakeyama H."/>
            <person name="Yasuda H."/>
            <person name="Nakamura K."/>
            <person name="Oda H."/>
            <person name="Miyazaki T."/>
            <person name="Tanaka S."/>
        </authorList>
    </citation>
    <scope>NUCLEOTIDE SEQUENCE [MRNA] (ISOFORM 2)</scope>
    <scope>FUNCTION</scope>
    <scope>TISSUE SPECIFICITY</scope>
    <source>
        <strain>BC8</strain>
    </source>
</reference>
<reference key="3">
    <citation type="submission" date="2005-02" db="EMBL/GenBank/DDBJ databases">
        <title>Prediction of the coding sequences of mouse homologues of KIAA gene. The complete nucleotide sequences of mouse KIAA-homologous cDNAs identified by screening of terminal sequences of cDNA clones randomly sampled from size-fractionated libraries.</title>
        <authorList>
            <person name="Okazaki N."/>
            <person name="Kikuno R.F."/>
            <person name="Ohara R."/>
            <person name="Inamoto S."/>
            <person name="Nagase T."/>
            <person name="Ohara O."/>
            <person name="Koga H."/>
        </authorList>
    </citation>
    <scope>NUCLEOTIDE SEQUENCE [LARGE SCALE MRNA] (ISOFORM 1)</scope>
    <source>
        <tissue>Spleen</tissue>
    </source>
</reference>
<reference key="4">
    <citation type="journal article" date="2005" name="Science">
        <title>The transcriptional landscape of the mammalian genome.</title>
        <authorList>
            <person name="Carninci P."/>
            <person name="Kasukawa T."/>
            <person name="Katayama S."/>
            <person name="Gough J."/>
            <person name="Frith M.C."/>
            <person name="Maeda N."/>
            <person name="Oyama R."/>
            <person name="Ravasi T."/>
            <person name="Lenhard B."/>
            <person name="Wells C."/>
            <person name="Kodzius R."/>
            <person name="Shimokawa K."/>
            <person name="Bajic V.B."/>
            <person name="Brenner S.E."/>
            <person name="Batalov S."/>
            <person name="Forrest A.R."/>
            <person name="Zavolan M."/>
            <person name="Davis M.J."/>
            <person name="Wilming L.G."/>
            <person name="Aidinis V."/>
            <person name="Allen J.E."/>
            <person name="Ambesi-Impiombato A."/>
            <person name="Apweiler R."/>
            <person name="Aturaliya R.N."/>
            <person name="Bailey T.L."/>
            <person name="Bansal M."/>
            <person name="Baxter L."/>
            <person name="Beisel K.W."/>
            <person name="Bersano T."/>
            <person name="Bono H."/>
            <person name="Chalk A.M."/>
            <person name="Chiu K.P."/>
            <person name="Choudhary V."/>
            <person name="Christoffels A."/>
            <person name="Clutterbuck D.R."/>
            <person name="Crowe M.L."/>
            <person name="Dalla E."/>
            <person name="Dalrymple B.P."/>
            <person name="de Bono B."/>
            <person name="Della Gatta G."/>
            <person name="di Bernardo D."/>
            <person name="Down T."/>
            <person name="Engstrom P."/>
            <person name="Fagiolini M."/>
            <person name="Faulkner G."/>
            <person name="Fletcher C.F."/>
            <person name="Fukushima T."/>
            <person name="Furuno M."/>
            <person name="Futaki S."/>
            <person name="Gariboldi M."/>
            <person name="Georgii-Hemming P."/>
            <person name="Gingeras T.R."/>
            <person name="Gojobori T."/>
            <person name="Green R.E."/>
            <person name="Gustincich S."/>
            <person name="Harbers M."/>
            <person name="Hayashi Y."/>
            <person name="Hensch T.K."/>
            <person name="Hirokawa N."/>
            <person name="Hill D."/>
            <person name="Huminiecki L."/>
            <person name="Iacono M."/>
            <person name="Ikeo K."/>
            <person name="Iwama A."/>
            <person name="Ishikawa T."/>
            <person name="Jakt M."/>
            <person name="Kanapin A."/>
            <person name="Katoh M."/>
            <person name="Kawasawa Y."/>
            <person name="Kelso J."/>
            <person name="Kitamura H."/>
            <person name="Kitano H."/>
            <person name="Kollias G."/>
            <person name="Krishnan S.P."/>
            <person name="Kruger A."/>
            <person name="Kummerfeld S.K."/>
            <person name="Kurochkin I.V."/>
            <person name="Lareau L.F."/>
            <person name="Lazarevic D."/>
            <person name="Lipovich L."/>
            <person name="Liu J."/>
            <person name="Liuni S."/>
            <person name="McWilliam S."/>
            <person name="Madan Babu M."/>
            <person name="Madera M."/>
            <person name="Marchionni L."/>
            <person name="Matsuda H."/>
            <person name="Matsuzawa S."/>
            <person name="Miki H."/>
            <person name="Mignone F."/>
            <person name="Miyake S."/>
            <person name="Morris K."/>
            <person name="Mottagui-Tabar S."/>
            <person name="Mulder N."/>
            <person name="Nakano N."/>
            <person name="Nakauchi H."/>
            <person name="Ng P."/>
            <person name="Nilsson R."/>
            <person name="Nishiguchi S."/>
            <person name="Nishikawa S."/>
            <person name="Nori F."/>
            <person name="Ohara O."/>
            <person name="Okazaki Y."/>
            <person name="Orlando V."/>
            <person name="Pang K.C."/>
            <person name="Pavan W.J."/>
            <person name="Pavesi G."/>
            <person name="Pesole G."/>
            <person name="Petrovsky N."/>
            <person name="Piazza S."/>
            <person name="Reed J."/>
            <person name="Reid J.F."/>
            <person name="Ring B.Z."/>
            <person name="Ringwald M."/>
            <person name="Rost B."/>
            <person name="Ruan Y."/>
            <person name="Salzberg S.L."/>
            <person name="Sandelin A."/>
            <person name="Schneider C."/>
            <person name="Schoenbach C."/>
            <person name="Sekiguchi K."/>
            <person name="Semple C.A."/>
            <person name="Seno S."/>
            <person name="Sessa L."/>
            <person name="Sheng Y."/>
            <person name="Shibata Y."/>
            <person name="Shimada H."/>
            <person name="Shimada K."/>
            <person name="Silva D."/>
            <person name="Sinclair B."/>
            <person name="Sperling S."/>
            <person name="Stupka E."/>
            <person name="Sugiura K."/>
            <person name="Sultana R."/>
            <person name="Takenaka Y."/>
            <person name="Taki K."/>
            <person name="Tammoja K."/>
            <person name="Tan S.L."/>
            <person name="Tang S."/>
            <person name="Taylor M.S."/>
            <person name="Tegner J."/>
            <person name="Teichmann S.A."/>
            <person name="Ueda H.R."/>
            <person name="van Nimwegen E."/>
            <person name="Verardo R."/>
            <person name="Wei C.L."/>
            <person name="Yagi K."/>
            <person name="Yamanishi H."/>
            <person name="Zabarovsky E."/>
            <person name="Zhu S."/>
            <person name="Zimmer A."/>
            <person name="Hide W."/>
            <person name="Bult C."/>
            <person name="Grimmond S.M."/>
            <person name="Teasdale R.D."/>
            <person name="Liu E.T."/>
            <person name="Brusic V."/>
            <person name="Quackenbush J."/>
            <person name="Wahlestedt C."/>
            <person name="Mattick J.S."/>
            <person name="Hume D.A."/>
            <person name="Kai C."/>
            <person name="Sasaki D."/>
            <person name="Tomaru Y."/>
            <person name="Fukuda S."/>
            <person name="Kanamori-Katayama M."/>
            <person name="Suzuki M."/>
            <person name="Aoki J."/>
            <person name="Arakawa T."/>
            <person name="Iida J."/>
            <person name="Imamura K."/>
            <person name="Itoh M."/>
            <person name="Kato T."/>
            <person name="Kawaji H."/>
            <person name="Kawagashira N."/>
            <person name="Kawashima T."/>
            <person name="Kojima M."/>
            <person name="Kondo S."/>
            <person name="Konno H."/>
            <person name="Nakano K."/>
            <person name="Ninomiya N."/>
            <person name="Nishio T."/>
            <person name="Okada M."/>
            <person name="Plessy C."/>
            <person name="Shibata K."/>
            <person name="Shiraki T."/>
            <person name="Suzuki S."/>
            <person name="Tagami M."/>
            <person name="Waki K."/>
            <person name="Watahiki A."/>
            <person name="Okamura-Oho Y."/>
            <person name="Suzuki H."/>
            <person name="Kawai J."/>
            <person name="Hayashizaki Y."/>
        </authorList>
    </citation>
    <scope>NUCLEOTIDE SEQUENCE [LARGE SCALE MRNA] (ISOFORM 1)</scope>
    <source>
        <strain>NOD</strain>
    </source>
</reference>
<reference key="5">
    <citation type="journal article" date="2004" name="Genome Res.">
        <title>The status, quality, and expansion of the NIH full-length cDNA project: the Mammalian Gene Collection (MGC).</title>
        <authorList>
            <consortium name="The MGC Project Team"/>
        </authorList>
    </citation>
    <scope>NUCLEOTIDE SEQUENCE [LARGE SCALE MRNA] (ISOFORM 1)</scope>
    <source>
        <strain>C57BL/6J</strain>
        <tissue>Brain</tissue>
        <tissue>Eye</tissue>
    </source>
</reference>
<reference key="6">
    <citation type="journal article" date="2010" name="Cell">
        <title>A tissue-specific atlas of mouse protein phosphorylation and expression.</title>
        <authorList>
            <person name="Huttlin E.L."/>
            <person name="Jedrychowski M.P."/>
            <person name="Elias J.E."/>
            <person name="Goswami T."/>
            <person name="Rad R."/>
            <person name="Beausoleil S.A."/>
            <person name="Villen J."/>
            <person name="Haas W."/>
            <person name="Sowa M.E."/>
            <person name="Gygi S.P."/>
        </authorList>
    </citation>
    <scope>IDENTIFICATION BY MASS SPECTROMETRY [LARGE SCALE ANALYSIS]</scope>
    <source>
        <tissue>Spleen</tissue>
    </source>
</reference>
<sequence>MAKRSSLSIRIVEGKNLPAKDITGSSDPYCIVKVDNEPIIRTATVWKTLCPFWGEDYQVHLPPTFHTVAFYVMDEDALSRDDVIGKVCLTRDALASHPKGFSGWTHLVEVDPNEEVQGEIHLRLEVVPGVHASRLRCAVLEARDLAPKDRNGASDPFVRVHYNGRTQETSVVKKSCYPRWNETFDFELEKGASEALLVEAWDWDLVSRNDFLGKVAVNVQRLCSAQQEEGWFRLQPDQSKSRQGKGNLGSLQLEVRLRDETVLPSVCYQPLVQLLCQEVKLGTQGPGRLIPVIEETTSAECRQEVATTLLKLFLGQGLAKDFLDLLFQLELGRTSEANTLFRSNSLASKSMESFLKVAGMRYLHGILGPIIDRVFEEKKYVELDPSKVEVKDVGCSGLHRPQTEAEVLEQSAQTLRAHLVALLSAICRSVRTCPAIIRATFRQLFRRVRERFPNAQHQNVPFIAVTSFLCLRFFSPAILSPKLFHLRERHADARTSRTLLLLAKAVQNIGNMDTPVSRAKESWMEPLQPTVRQGVAQLKDFIMKLVDIEEKEELDLQRALNSQAPPVKEGPLFIHRTKGKGPLASSSFKKLYFSLTTEALSFAKTSSSKKSTFIKLASIRAAEKVEEKSFGSSHIMQVIYADDVGRAQTVYLQCKCVNELNQWLSALRKASTNNRGLLRSYHPGIFRGDKWSCCHQKDKTDQGCDKTHSRVTLQEWNDPLDHDLEAQLIYRHLLGVEAALRERYQLLRGATEAGVSPTGCDGAPEDSLAQLLRVLQDLREAHGSSLASPAAREPHHLLELQT</sequence>
<name>RASL2_MOUSE</name>
<comment type="function">
    <text evidence="6 7">Ca(2+)-dependent Ras GTPase-activating protein, that switches off the Ras-MAPK pathway following a stimulus that elevates intracellular calcium. Functions as an adaptor for Cdc42 and Rac1 during FcR-mediated phagocytosis. Isoform 2 activates the Ras pathway and promotes RANKL shedding by modulating the expression of MMP14.</text>
</comment>
<comment type="cofactor">
    <cofactor evidence="2">
        <name>Ca(2+)</name>
        <dbReference type="ChEBI" id="CHEBI:29108"/>
    </cofactor>
    <text evidence="2">Binds 3 Ca(2+) ions per C2 domain.</text>
</comment>
<comment type="subcellular location">
    <subcellularLocation>
        <location>Cytoplasm</location>
        <location>Cytosol</location>
    </subcellularLocation>
    <subcellularLocation>
        <location>Cell membrane</location>
        <topology>Peripheral membrane protein</topology>
    </subcellularLocation>
    <text>Localized to the cytosol as a result of its lack of phosphoinositide binding activity. Upon agonist-stimulated calcium mobilization, utilizes the C2A and C2B domains to associate with the plasma membrane.</text>
</comment>
<comment type="alternative products">
    <event type="alternative splicing"/>
    <isoform>
        <id>Q6PFQ7-1</id>
        <name>1</name>
        <sequence type="displayed"/>
    </isoform>
    <isoform>
        <id>Q6PFQ7-2</id>
        <name>2</name>
        <name>deltaCAPRI</name>
        <sequence type="described" ref="VSP_032042"/>
    </isoform>
</comment>
<comment type="tissue specificity">
    <text evidence="7">Isoform 2 is expressed in osteoblasts.</text>
</comment>
<comment type="domain">
    <text evidence="1">The PH domain does not bind phosphatidylinositol 4,5-bisphosphate or phosphatidylinositol 3,4,5-trisphosphate. This lack of binding activity is due to Leu-591, compared to Arg found in other family members (By similarity).</text>
</comment>
<comment type="sequence caution" evidence="9">
    <conflict type="erroneous initiation">
        <sequence resource="EMBL-CDS" id="BAD90143"/>
    </conflict>
</comment>
<dbReference type="EMBL" id="AY591339">
    <property type="protein sequence ID" value="AAT00515.1"/>
    <property type="molecule type" value="mRNA"/>
</dbReference>
<dbReference type="EMBL" id="DQ317932">
    <property type="protein sequence ID" value="ABC47038.1"/>
    <property type="molecule type" value="mRNA"/>
</dbReference>
<dbReference type="EMBL" id="AK220218">
    <property type="protein sequence ID" value="BAD90143.1"/>
    <property type="status" value="ALT_INIT"/>
    <property type="molecule type" value="mRNA"/>
</dbReference>
<dbReference type="EMBL" id="AK154335">
    <property type="protein sequence ID" value="BAE32521.1"/>
    <property type="molecule type" value="mRNA"/>
</dbReference>
<dbReference type="EMBL" id="AK155146">
    <property type="protein sequence ID" value="BAE33076.1"/>
    <property type="molecule type" value="mRNA"/>
</dbReference>
<dbReference type="EMBL" id="BC057460">
    <property type="protein sequence ID" value="AAH57460.1"/>
    <property type="molecule type" value="mRNA"/>
</dbReference>
<dbReference type="EMBL" id="BC092143">
    <property type="protein sequence ID" value="AAH92143.1"/>
    <property type="molecule type" value="mRNA"/>
</dbReference>
<dbReference type="CCDS" id="CCDS39324.1">
    <molecule id="Q6PFQ7-1"/>
</dbReference>
<dbReference type="CCDS" id="CCDS39325.1">
    <molecule id="Q6PFQ7-2"/>
</dbReference>
<dbReference type="RefSeq" id="NP_001034192.1">
    <molecule id="Q6PFQ7-2"/>
    <property type="nucleotide sequence ID" value="NM_001039103.4"/>
</dbReference>
<dbReference type="RefSeq" id="NP_598675.2">
    <molecule id="Q6PFQ7-1"/>
    <property type="nucleotide sequence ID" value="NM_133914.3"/>
</dbReference>
<dbReference type="SMR" id="Q6PFQ7"/>
<dbReference type="BioGRID" id="207581">
    <property type="interactions" value="1"/>
</dbReference>
<dbReference type="FunCoup" id="Q6PFQ7">
    <property type="interactions" value="345"/>
</dbReference>
<dbReference type="STRING" id="10090.ENSMUSP00000037869"/>
<dbReference type="GlyGen" id="Q6PFQ7">
    <property type="glycosylation" value="1 site, 1 O-linked glycan (1 site)"/>
</dbReference>
<dbReference type="iPTMnet" id="Q6PFQ7"/>
<dbReference type="PhosphoSitePlus" id="Q6PFQ7"/>
<dbReference type="PaxDb" id="10090-ENSMUSP00000037869"/>
<dbReference type="PeptideAtlas" id="Q6PFQ7"/>
<dbReference type="ProteomicsDB" id="254989">
    <molecule id="Q6PFQ7-1"/>
</dbReference>
<dbReference type="ProteomicsDB" id="254990">
    <molecule id="Q6PFQ7-2"/>
</dbReference>
<dbReference type="Pumba" id="Q6PFQ7"/>
<dbReference type="DNASU" id="54153"/>
<dbReference type="Ensembl" id="ENSMUST00000042135.14">
    <molecule id="Q6PFQ7-1"/>
    <property type="protein sequence ID" value="ENSMUSP00000037869.8"/>
    <property type="gene ID" value="ENSMUSG00000004952.14"/>
</dbReference>
<dbReference type="Ensembl" id="ENSMUST00000100570.10">
    <molecule id="Q6PFQ7-2"/>
    <property type="protein sequence ID" value="ENSMUSP00000098136.4"/>
    <property type="gene ID" value="ENSMUSG00000004952.14"/>
</dbReference>
<dbReference type="GeneID" id="54153"/>
<dbReference type="KEGG" id="mmu:54153"/>
<dbReference type="UCSC" id="uc008zzt.2">
    <molecule id="Q6PFQ7-1"/>
    <property type="organism name" value="mouse"/>
</dbReference>
<dbReference type="UCSC" id="uc008zzu.2">
    <molecule id="Q6PFQ7-2"/>
    <property type="organism name" value="mouse"/>
</dbReference>
<dbReference type="AGR" id="MGI:1858600"/>
<dbReference type="CTD" id="10156"/>
<dbReference type="MGI" id="MGI:1858600">
    <property type="gene designation" value="Rasa4"/>
</dbReference>
<dbReference type="VEuPathDB" id="HostDB:ENSMUSG00000004952"/>
<dbReference type="eggNOG" id="KOG2059">
    <property type="taxonomic scope" value="Eukaryota"/>
</dbReference>
<dbReference type="GeneTree" id="ENSGT00940000160149"/>
<dbReference type="HOGENOM" id="CLU_008096_0_0_1"/>
<dbReference type="InParanoid" id="Q6PFQ7"/>
<dbReference type="OMA" id="VGCDKTR"/>
<dbReference type="OrthoDB" id="1562946at2759"/>
<dbReference type="PhylomeDB" id="Q6PFQ7"/>
<dbReference type="TreeFam" id="TF105302"/>
<dbReference type="Reactome" id="R-MMU-5658442">
    <property type="pathway name" value="Regulation of RAS by GAPs"/>
</dbReference>
<dbReference type="BioGRID-ORCS" id="54153">
    <property type="hits" value="1 hit in 79 CRISPR screens"/>
</dbReference>
<dbReference type="CD-CODE" id="CE726F99">
    <property type="entry name" value="Postsynaptic density"/>
</dbReference>
<dbReference type="ChiTaRS" id="Rasa4">
    <property type="organism name" value="mouse"/>
</dbReference>
<dbReference type="PRO" id="PR:Q6PFQ7"/>
<dbReference type="Proteomes" id="UP000000589">
    <property type="component" value="Chromosome 5"/>
</dbReference>
<dbReference type="RNAct" id="Q6PFQ7">
    <property type="molecule type" value="protein"/>
</dbReference>
<dbReference type="Bgee" id="ENSMUSG00000004952">
    <property type="expression patterns" value="Expressed in primary oocyte and 119 other cell types or tissues"/>
</dbReference>
<dbReference type="ExpressionAtlas" id="Q6PFQ7">
    <property type="expression patterns" value="baseline and differential"/>
</dbReference>
<dbReference type="GO" id="GO:0005829">
    <property type="term" value="C:cytosol"/>
    <property type="evidence" value="ECO:0007669"/>
    <property type="project" value="UniProtKB-SubCell"/>
</dbReference>
<dbReference type="GO" id="GO:0005886">
    <property type="term" value="C:plasma membrane"/>
    <property type="evidence" value="ECO:0007669"/>
    <property type="project" value="UniProtKB-SubCell"/>
</dbReference>
<dbReference type="GO" id="GO:0005096">
    <property type="term" value="F:GTPase activator activity"/>
    <property type="evidence" value="ECO:0007669"/>
    <property type="project" value="UniProtKB-KW"/>
</dbReference>
<dbReference type="GO" id="GO:0005543">
    <property type="term" value="F:phospholipid binding"/>
    <property type="evidence" value="ECO:0007669"/>
    <property type="project" value="InterPro"/>
</dbReference>
<dbReference type="GO" id="GO:0008270">
    <property type="term" value="F:zinc ion binding"/>
    <property type="evidence" value="ECO:0007669"/>
    <property type="project" value="UniProtKB-KW"/>
</dbReference>
<dbReference type="GO" id="GO:0071277">
    <property type="term" value="P:cellular response to calcium ion"/>
    <property type="evidence" value="ECO:0007669"/>
    <property type="project" value="InterPro"/>
</dbReference>
<dbReference type="GO" id="GO:0035556">
    <property type="term" value="P:intracellular signal transduction"/>
    <property type="evidence" value="ECO:0007669"/>
    <property type="project" value="InterPro"/>
</dbReference>
<dbReference type="GO" id="GO:0046580">
    <property type="term" value="P:negative regulation of Ras protein signal transduction"/>
    <property type="evidence" value="ECO:0007669"/>
    <property type="project" value="InterPro"/>
</dbReference>
<dbReference type="CDD" id="cd04054">
    <property type="entry name" value="C2A_Rasal1_RasA4"/>
    <property type="match status" value="1"/>
</dbReference>
<dbReference type="CDD" id="cd13372">
    <property type="entry name" value="PH_CAPRI"/>
    <property type="match status" value="1"/>
</dbReference>
<dbReference type="CDD" id="cd05395">
    <property type="entry name" value="RasGAP_RASA4"/>
    <property type="match status" value="1"/>
</dbReference>
<dbReference type="FunFam" id="1.10.506.10:FF:000020">
    <property type="entry name" value="Ras GTPase-activating protein 4 isoform 1"/>
    <property type="match status" value="1"/>
</dbReference>
<dbReference type="FunFam" id="2.30.29.30:FF:000283">
    <property type="entry name" value="Ras GTPase-activating protein 4 isoform 1"/>
    <property type="match status" value="1"/>
</dbReference>
<dbReference type="FunFam" id="2.60.40.150:FF:000069">
    <property type="entry name" value="Ras GTPase-activating protein 4 isoform 1"/>
    <property type="match status" value="1"/>
</dbReference>
<dbReference type="Gene3D" id="2.60.40.150">
    <property type="entry name" value="C2 domain"/>
    <property type="match status" value="2"/>
</dbReference>
<dbReference type="Gene3D" id="1.10.506.10">
    <property type="entry name" value="GTPase Activation - p120gap, domain 1"/>
    <property type="match status" value="1"/>
</dbReference>
<dbReference type="Gene3D" id="2.30.29.30">
    <property type="entry name" value="Pleckstrin-homology domain (PH domain)/Phosphotyrosine-binding domain (PTB)"/>
    <property type="match status" value="1"/>
</dbReference>
<dbReference type="InterPro" id="IPR000008">
    <property type="entry name" value="C2_dom"/>
</dbReference>
<dbReference type="InterPro" id="IPR035892">
    <property type="entry name" value="C2_domain_sf"/>
</dbReference>
<dbReference type="InterPro" id="IPR011993">
    <property type="entry name" value="PH-like_dom_sf"/>
</dbReference>
<dbReference type="InterPro" id="IPR001849">
    <property type="entry name" value="PH_domain"/>
</dbReference>
<dbReference type="InterPro" id="IPR039360">
    <property type="entry name" value="Ras_GTPase"/>
</dbReference>
<dbReference type="InterPro" id="IPR037777">
    <property type="entry name" value="RASA4_PH"/>
</dbReference>
<dbReference type="InterPro" id="IPR023152">
    <property type="entry name" value="RasGAP_CS"/>
</dbReference>
<dbReference type="InterPro" id="IPR001936">
    <property type="entry name" value="RasGAP_dom"/>
</dbReference>
<dbReference type="InterPro" id="IPR008936">
    <property type="entry name" value="Rho_GTPase_activation_prot"/>
</dbReference>
<dbReference type="InterPro" id="IPR001562">
    <property type="entry name" value="Znf_Btk_motif"/>
</dbReference>
<dbReference type="PANTHER" id="PTHR10194:SF4">
    <property type="entry name" value="RAS GTPASE-ACTIVATING PROTEIN 4-RELATED"/>
    <property type="match status" value="1"/>
</dbReference>
<dbReference type="PANTHER" id="PTHR10194">
    <property type="entry name" value="RAS GTPASE-ACTIVATING PROTEINS"/>
    <property type="match status" value="1"/>
</dbReference>
<dbReference type="Pfam" id="PF00779">
    <property type="entry name" value="BTK"/>
    <property type="match status" value="1"/>
</dbReference>
<dbReference type="Pfam" id="PF00168">
    <property type="entry name" value="C2"/>
    <property type="match status" value="2"/>
</dbReference>
<dbReference type="Pfam" id="PF00169">
    <property type="entry name" value="PH"/>
    <property type="match status" value="1"/>
</dbReference>
<dbReference type="Pfam" id="PF00616">
    <property type="entry name" value="RasGAP"/>
    <property type="match status" value="1"/>
</dbReference>
<dbReference type="PRINTS" id="PR00360">
    <property type="entry name" value="C2DOMAIN"/>
</dbReference>
<dbReference type="SMART" id="SM00107">
    <property type="entry name" value="BTK"/>
    <property type="match status" value="1"/>
</dbReference>
<dbReference type="SMART" id="SM00239">
    <property type="entry name" value="C2"/>
    <property type="match status" value="2"/>
</dbReference>
<dbReference type="SMART" id="SM00233">
    <property type="entry name" value="PH"/>
    <property type="match status" value="1"/>
</dbReference>
<dbReference type="SMART" id="SM00323">
    <property type="entry name" value="RasGAP"/>
    <property type="match status" value="1"/>
</dbReference>
<dbReference type="SUPFAM" id="SSF49562">
    <property type="entry name" value="C2 domain (Calcium/lipid-binding domain, CaLB)"/>
    <property type="match status" value="2"/>
</dbReference>
<dbReference type="SUPFAM" id="SSF48350">
    <property type="entry name" value="GTPase activation domain, GAP"/>
    <property type="match status" value="1"/>
</dbReference>
<dbReference type="SUPFAM" id="SSF50729">
    <property type="entry name" value="PH domain-like"/>
    <property type="match status" value="1"/>
</dbReference>
<dbReference type="PROSITE" id="PS50004">
    <property type="entry name" value="C2"/>
    <property type="match status" value="2"/>
</dbReference>
<dbReference type="PROSITE" id="PS50003">
    <property type="entry name" value="PH_DOMAIN"/>
    <property type="match status" value="1"/>
</dbReference>
<dbReference type="PROSITE" id="PS00509">
    <property type="entry name" value="RAS_GTPASE_ACTIV_1"/>
    <property type="match status" value="1"/>
</dbReference>
<dbReference type="PROSITE" id="PS50018">
    <property type="entry name" value="RAS_GTPASE_ACTIV_2"/>
    <property type="match status" value="1"/>
</dbReference>
<dbReference type="PROSITE" id="PS51113">
    <property type="entry name" value="ZF_BTK"/>
    <property type="match status" value="1"/>
</dbReference>
<feature type="chain" id="PRO_0000323606" description="Ras GTPase-activating protein 4">
    <location>
        <begin position="1"/>
        <end position="802"/>
    </location>
</feature>
<feature type="domain" description="C2 1" evidence="2">
    <location>
        <begin position="1"/>
        <end position="105"/>
    </location>
</feature>
<feature type="domain" description="C2 2" evidence="2">
    <location>
        <begin position="116"/>
        <end position="232"/>
    </location>
</feature>
<feature type="domain" description="Ras-GAP" evidence="4">
    <location>
        <begin position="317"/>
        <end position="545"/>
    </location>
</feature>
<feature type="domain" description="PH" evidence="3">
    <location>
        <begin position="565"/>
        <end position="672"/>
    </location>
</feature>
<feature type="zinc finger region" description="Btk-type" evidence="5">
    <location>
        <begin position="674"/>
        <end position="710"/>
    </location>
</feature>
<feature type="binding site" evidence="2">
    <location>
        <position position="21"/>
    </location>
    <ligand>
        <name>Ca(2+)</name>
        <dbReference type="ChEBI" id="CHEBI:29108"/>
        <label>1</label>
    </ligand>
</feature>
<feature type="binding site" evidence="2">
    <location>
        <position position="21"/>
    </location>
    <ligand>
        <name>Ca(2+)</name>
        <dbReference type="ChEBI" id="CHEBI:29108"/>
        <label>2</label>
    </ligand>
</feature>
<feature type="binding site" evidence="2">
    <location>
        <position position="27"/>
    </location>
    <ligand>
        <name>Ca(2+)</name>
        <dbReference type="ChEBI" id="CHEBI:29108"/>
        <label>1</label>
    </ligand>
</feature>
<feature type="binding site" evidence="2">
    <location>
        <position position="74"/>
    </location>
    <ligand>
        <name>Ca(2+)</name>
        <dbReference type="ChEBI" id="CHEBI:29108"/>
        <label>1</label>
    </ligand>
</feature>
<feature type="binding site" evidence="2">
    <location>
        <position position="74"/>
    </location>
    <ligand>
        <name>Ca(2+)</name>
        <dbReference type="ChEBI" id="CHEBI:29108"/>
        <label>2</label>
    </ligand>
</feature>
<feature type="binding site" evidence="2">
    <location>
        <position position="76"/>
    </location>
    <ligand>
        <name>Ca(2+)</name>
        <dbReference type="ChEBI" id="CHEBI:29108"/>
        <label>1</label>
    </ligand>
</feature>
<feature type="binding site" evidence="2">
    <location>
        <position position="76"/>
    </location>
    <ligand>
        <name>Ca(2+)</name>
        <dbReference type="ChEBI" id="CHEBI:29108"/>
        <label>2</label>
    </ligand>
</feature>
<feature type="binding site" evidence="2">
    <location>
        <position position="76"/>
    </location>
    <ligand>
        <name>Ca(2+)</name>
        <dbReference type="ChEBI" id="CHEBI:29108"/>
        <label>3</label>
    </ligand>
</feature>
<feature type="binding site" evidence="2">
    <location>
        <position position="79"/>
    </location>
    <ligand>
        <name>Ca(2+)</name>
        <dbReference type="ChEBI" id="CHEBI:29108"/>
        <label>3</label>
    </ligand>
</feature>
<feature type="binding site" evidence="2">
    <location>
        <position position="82"/>
    </location>
    <ligand>
        <name>Ca(2+)</name>
        <dbReference type="ChEBI" id="CHEBI:29108"/>
        <label>2</label>
    </ligand>
</feature>
<feature type="binding site" evidence="2">
    <location>
        <position position="82"/>
    </location>
    <ligand>
        <name>Ca(2+)</name>
        <dbReference type="ChEBI" id="CHEBI:29108"/>
        <label>3</label>
    </ligand>
</feature>
<feature type="binding site" evidence="2">
    <location>
        <position position="149"/>
    </location>
    <ligand>
        <name>Ca(2+)</name>
        <dbReference type="ChEBI" id="CHEBI:29108"/>
        <label>4</label>
    </ligand>
</feature>
<feature type="binding site" evidence="2">
    <location>
        <position position="149"/>
    </location>
    <ligand>
        <name>Ca(2+)</name>
        <dbReference type="ChEBI" id="CHEBI:29108"/>
        <label>5</label>
    </ligand>
</feature>
<feature type="binding site" evidence="2">
    <location>
        <position position="155"/>
    </location>
    <ligand>
        <name>Ca(2+)</name>
        <dbReference type="ChEBI" id="CHEBI:29108"/>
        <label>4</label>
    </ligand>
</feature>
<feature type="binding site" evidence="2">
    <location>
        <position position="202"/>
    </location>
    <ligand>
        <name>Ca(2+)</name>
        <dbReference type="ChEBI" id="CHEBI:29108"/>
        <label>4</label>
    </ligand>
</feature>
<feature type="binding site" evidence="2">
    <location>
        <position position="202"/>
    </location>
    <ligand>
        <name>Ca(2+)</name>
        <dbReference type="ChEBI" id="CHEBI:29108"/>
        <label>5</label>
    </ligand>
</feature>
<feature type="binding site" evidence="2">
    <location>
        <position position="204"/>
    </location>
    <ligand>
        <name>Ca(2+)</name>
        <dbReference type="ChEBI" id="CHEBI:29108"/>
        <label>4</label>
    </ligand>
</feature>
<feature type="binding site" evidence="2">
    <location>
        <position position="204"/>
    </location>
    <ligand>
        <name>Ca(2+)</name>
        <dbReference type="ChEBI" id="CHEBI:29108"/>
        <label>5</label>
    </ligand>
</feature>
<feature type="binding site" evidence="2">
    <location>
        <position position="204"/>
    </location>
    <ligand>
        <name>Ca(2+)</name>
        <dbReference type="ChEBI" id="CHEBI:29108"/>
        <label>6</label>
    </ligand>
</feature>
<feature type="binding site" evidence="2">
    <location>
        <position position="207"/>
    </location>
    <ligand>
        <name>Ca(2+)</name>
        <dbReference type="ChEBI" id="CHEBI:29108"/>
        <label>6</label>
    </ligand>
</feature>
<feature type="binding site" evidence="2">
    <location>
        <position position="210"/>
    </location>
    <ligand>
        <name>Ca(2+)</name>
        <dbReference type="ChEBI" id="CHEBI:29108"/>
        <label>5</label>
    </ligand>
</feature>
<feature type="binding site" evidence="2">
    <location>
        <position position="210"/>
    </location>
    <ligand>
        <name>Ca(2+)</name>
        <dbReference type="ChEBI" id="CHEBI:29108"/>
        <label>6</label>
    </ligand>
</feature>
<feature type="binding site" evidence="5">
    <location>
        <position position="682"/>
    </location>
    <ligand>
        <name>Zn(2+)</name>
        <dbReference type="ChEBI" id="CHEBI:29105"/>
    </ligand>
</feature>
<feature type="binding site" evidence="5">
    <location>
        <position position="693"/>
    </location>
    <ligand>
        <name>Zn(2+)</name>
        <dbReference type="ChEBI" id="CHEBI:29105"/>
    </ligand>
</feature>
<feature type="binding site" evidence="5">
    <location>
        <position position="694"/>
    </location>
    <ligand>
        <name>Zn(2+)</name>
        <dbReference type="ChEBI" id="CHEBI:29105"/>
    </ligand>
</feature>
<feature type="binding site" evidence="5">
    <location>
        <position position="704"/>
    </location>
    <ligand>
        <name>Zn(2+)</name>
        <dbReference type="ChEBI" id="CHEBI:29105"/>
    </ligand>
</feature>
<feature type="site" description="Arginine finger; crucial for GTP hydrolysis by stabilizing the transition state" evidence="4">
    <location>
        <position position="342"/>
    </location>
</feature>
<feature type="splice variant" id="VSP_032042" description="In isoform 2." evidence="8">
    <location>
        <begin position="459"/>
        <end position="504"/>
    </location>
</feature>
<feature type="sequence conflict" description="In Ref. 3; BAD90143." evidence="9" ref="3">
    <original>R</original>
    <variation>Q</variation>
    <location>
        <position position="208"/>
    </location>
</feature>
<feature type="sequence conflict" description="In Ref. 3; BAD90143." evidence="9" ref="3">
    <original>A</original>
    <variation>V</variation>
    <location>
        <position position="216"/>
    </location>
</feature>
<feature type="sequence conflict" description="In Ref. 4; BAE33076." evidence="9" ref="4">
    <original>S</original>
    <variation>I</variation>
    <location>
        <position position="298"/>
    </location>
</feature>
<accession>Q6PFQ7</accession>
<accession>Q2PMI6</accession>
<accession>Q3U2R4</accession>
<accession>Q571H1</accession>
<accession>Q58DY7</accession>
<gene>
    <name type="primary">Rasa4</name>
    <name type="synonym">Capri</name>
    <name type="synonym">Kiaa0538</name>
</gene>
<organism>
    <name type="scientific">Mus musculus</name>
    <name type="common">Mouse</name>
    <dbReference type="NCBI Taxonomy" id="10090"/>
    <lineage>
        <taxon>Eukaryota</taxon>
        <taxon>Metazoa</taxon>
        <taxon>Chordata</taxon>
        <taxon>Craniata</taxon>
        <taxon>Vertebrata</taxon>
        <taxon>Euteleostomi</taxon>
        <taxon>Mammalia</taxon>
        <taxon>Eutheria</taxon>
        <taxon>Euarchontoglires</taxon>
        <taxon>Glires</taxon>
        <taxon>Rodentia</taxon>
        <taxon>Myomorpha</taxon>
        <taxon>Muroidea</taxon>
        <taxon>Muridae</taxon>
        <taxon>Murinae</taxon>
        <taxon>Mus</taxon>
        <taxon>Mus</taxon>
    </lineage>
</organism>
<proteinExistence type="evidence at protein level"/>